<comment type="function">
    <text evidence="1">Hydrolyzes ribosome-free peptidyl-tRNAs (with 1 or more amino acids incorporated), which drop off the ribosome during protein synthesis, or as a result of ribosome stalling.</text>
</comment>
<comment type="function">
    <text evidence="1">Catalyzes the release of premature peptidyl moieties from peptidyl-tRNA molecules trapped in stalled 50S ribosomal subunits, and thus maintains levels of free tRNAs and 50S ribosomes.</text>
</comment>
<comment type="catalytic activity">
    <reaction evidence="1">
        <text>an N-acyl-L-alpha-aminoacyl-tRNA + H2O = an N-acyl-L-amino acid + a tRNA + H(+)</text>
        <dbReference type="Rhea" id="RHEA:54448"/>
        <dbReference type="Rhea" id="RHEA-COMP:10123"/>
        <dbReference type="Rhea" id="RHEA-COMP:13883"/>
        <dbReference type="ChEBI" id="CHEBI:15377"/>
        <dbReference type="ChEBI" id="CHEBI:15378"/>
        <dbReference type="ChEBI" id="CHEBI:59874"/>
        <dbReference type="ChEBI" id="CHEBI:78442"/>
        <dbReference type="ChEBI" id="CHEBI:138191"/>
        <dbReference type="EC" id="3.1.1.29"/>
    </reaction>
</comment>
<comment type="subunit">
    <text evidence="1">Monomer.</text>
</comment>
<comment type="subcellular location">
    <subcellularLocation>
        <location evidence="1">Cytoplasm</location>
    </subcellularLocation>
</comment>
<comment type="similarity">
    <text evidence="1">Belongs to the PTH family.</text>
</comment>
<accession>C1DEV7</accession>
<name>PTH_AZOVD</name>
<proteinExistence type="inferred from homology"/>
<evidence type="ECO:0000255" key="1">
    <source>
        <dbReference type="HAMAP-Rule" id="MF_00083"/>
    </source>
</evidence>
<feature type="chain" id="PRO_1000202575" description="Peptidyl-tRNA hydrolase">
    <location>
        <begin position="1"/>
        <end position="194"/>
    </location>
</feature>
<feature type="active site" description="Proton acceptor" evidence="1">
    <location>
        <position position="22"/>
    </location>
</feature>
<feature type="binding site" evidence="1">
    <location>
        <position position="17"/>
    </location>
    <ligand>
        <name>tRNA</name>
        <dbReference type="ChEBI" id="CHEBI:17843"/>
    </ligand>
</feature>
<feature type="binding site" evidence="1">
    <location>
        <position position="68"/>
    </location>
    <ligand>
        <name>tRNA</name>
        <dbReference type="ChEBI" id="CHEBI:17843"/>
    </ligand>
</feature>
<feature type="binding site" evidence="1">
    <location>
        <position position="70"/>
    </location>
    <ligand>
        <name>tRNA</name>
        <dbReference type="ChEBI" id="CHEBI:17843"/>
    </ligand>
</feature>
<feature type="binding site" evidence="1">
    <location>
        <position position="116"/>
    </location>
    <ligand>
        <name>tRNA</name>
        <dbReference type="ChEBI" id="CHEBI:17843"/>
    </ligand>
</feature>
<feature type="site" description="Discriminates between blocked and unblocked aminoacyl-tRNA" evidence="1">
    <location>
        <position position="12"/>
    </location>
</feature>
<feature type="site" description="Stabilizes the basic form of H active site to accept a proton" evidence="1">
    <location>
        <position position="95"/>
    </location>
</feature>
<keyword id="KW-0963">Cytoplasm</keyword>
<keyword id="KW-0378">Hydrolase</keyword>
<keyword id="KW-0694">RNA-binding</keyword>
<keyword id="KW-0820">tRNA-binding</keyword>
<gene>
    <name evidence="1" type="primary">pth</name>
    <name type="ordered locus">Avin_41540</name>
</gene>
<sequence>MTAVQLIVGLGNPGPEYEQTRHNAGALFVERVASAKGVRLSADKKYFGLVGKFSHQGRDVRLLIPTTYMNRSGQSVAALANFFRIPPAAILVAHDELDMPPGTARLKQGGGHGGHNGLRDIIAQFGNQNSFYRLRLGIGHPGDKNLVSGFVLGRAPRSEQEKLEACIDFALDVLPDMLDGNWTRAMQQLHSRKA</sequence>
<protein>
    <recommendedName>
        <fullName evidence="1">Peptidyl-tRNA hydrolase</fullName>
        <shortName evidence="1">Pth</shortName>
        <ecNumber evidence="1">3.1.1.29</ecNumber>
    </recommendedName>
</protein>
<organism>
    <name type="scientific">Azotobacter vinelandii (strain DJ / ATCC BAA-1303)</name>
    <dbReference type="NCBI Taxonomy" id="322710"/>
    <lineage>
        <taxon>Bacteria</taxon>
        <taxon>Pseudomonadati</taxon>
        <taxon>Pseudomonadota</taxon>
        <taxon>Gammaproteobacteria</taxon>
        <taxon>Pseudomonadales</taxon>
        <taxon>Pseudomonadaceae</taxon>
        <taxon>Azotobacter</taxon>
    </lineage>
</organism>
<dbReference type="EC" id="3.1.1.29" evidence="1"/>
<dbReference type="EMBL" id="CP001157">
    <property type="protein sequence ID" value="ACO80286.1"/>
    <property type="molecule type" value="Genomic_DNA"/>
</dbReference>
<dbReference type="RefSeq" id="WP_012702659.1">
    <property type="nucleotide sequence ID" value="NC_012560.1"/>
</dbReference>
<dbReference type="SMR" id="C1DEV7"/>
<dbReference type="STRING" id="322710.Avin_41540"/>
<dbReference type="EnsemblBacteria" id="ACO80286">
    <property type="protein sequence ID" value="ACO80286"/>
    <property type="gene ID" value="Avin_41540"/>
</dbReference>
<dbReference type="GeneID" id="88187087"/>
<dbReference type="KEGG" id="avn:Avin_41540"/>
<dbReference type="eggNOG" id="COG0193">
    <property type="taxonomic scope" value="Bacteria"/>
</dbReference>
<dbReference type="HOGENOM" id="CLU_062456_3_1_6"/>
<dbReference type="OrthoDB" id="9800507at2"/>
<dbReference type="Proteomes" id="UP000002424">
    <property type="component" value="Chromosome"/>
</dbReference>
<dbReference type="GO" id="GO:0005737">
    <property type="term" value="C:cytoplasm"/>
    <property type="evidence" value="ECO:0007669"/>
    <property type="project" value="UniProtKB-SubCell"/>
</dbReference>
<dbReference type="GO" id="GO:0004045">
    <property type="term" value="F:peptidyl-tRNA hydrolase activity"/>
    <property type="evidence" value="ECO:0007669"/>
    <property type="project" value="UniProtKB-UniRule"/>
</dbReference>
<dbReference type="GO" id="GO:0000049">
    <property type="term" value="F:tRNA binding"/>
    <property type="evidence" value="ECO:0007669"/>
    <property type="project" value="UniProtKB-UniRule"/>
</dbReference>
<dbReference type="GO" id="GO:0006515">
    <property type="term" value="P:protein quality control for misfolded or incompletely synthesized proteins"/>
    <property type="evidence" value="ECO:0007669"/>
    <property type="project" value="UniProtKB-UniRule"/>
</dbReference>
<dbReference type="GO" id="GO:0072344">
    <property type="term" value="P:rescue of stalled ribosome"/>
    <property type="evidence" value="ECO:0007669"/>
    <property type="project" value="UniProtKB-UniRule"/>
</dbReference>
<dbReference type="CDD" id="cd00462">
    <property type="entry name" value="PTH"/>
    <property type="match status" value="1"/>
</dbReference>
<dbReference type="FunFam" id="3.40.50.1470:FF:000001">
    <property type="entry name" value="Peptidyl-tRNA hydrolase"/>
    <property type="match status" value="1"/>
</dbReference>
<dbReference type="Gene3D" id="3.40.50.1470">
    <property type="entry name" value="Peptidyl-tRNA hydrolase"/>
    <property type="match status" value="1"/>
</dbReference>
<dbReference type="HAMAP" id="MF_00083">
    <property type="entry name" value="Pept_tRNA_hydro_bact"/>
    <property type="match status" value="1"/>
</dbReference>
<dbReference type="InterPro" id="IPR001328">
    <property type="entry name" value="Pept_tRNA_hydro"/>
</dbReference>
<dbReference type="InterPro" id="IPR018171">
    <property type="entry name" value="Pept_tRNA_hydro_CS"/>
</dbReference>
<dbReference type="InterPro" id="IPR036416">
    <property type="entry name" value="Pept_tRNA_hydro_sf"/>
</dbReference>
<dbReference type="NCBIfam" id="TIGR00447">
    <property type="entry name" value="pth"/>
    <property type="match status" value="1"/>
</dbReference>
<dbReference type="PANTHER" id="PTHR17224">
    <property type="entry name" value="PEPTIDYL-TRNA HYDROLASE"/>
    <property type="match status" value="1"/>
</dbReference>
<dbReference type="PANTHER" id="PTHR17224:SF1">
    <property type="entry name" value="PEPTIDYL-TRNA HYDROLASE"/>
    <property type="match status" value="1"/>
</dbReference>
<dbReference type="Pfam" id="PF01195">
    <property type="entry name" value="Pept_tRNA_hydro"/>
    <property type="match status" value="1"/>
</dbReference>
<dbReference type="SUPFAM" id="SSF53178">
    <property type="entry name" value="Peptidyl-tRNA hydrolase-like"/>
    <property type="match status" value="1"/>
</dbReference>
<dbReference type="PROSITE" id="PS01195">
    <property type="entry name" value="PEPT_TRNA_HYDROL_1"/>
    <property type="match status" value="1"/>
</dbReference>
<dbReference type="PROSITE" id="PS01196">
    <property type="entry name" value="PEPT_TRNA_HYDROL_2"/>
    <property type="match status" value="1"/>
</dbReference>
<reference key="1">
    <citation type="journal article" date="2009" name="J. Bacteriol.">
        <title>Genome sequence of Azotobacter vinelandii, an obligate aerobe specialized to support diverse anaerobic metabolic processes.</title>
        <authorList>
            <person name="Setubal J.C."/>
            <person name="Dos Santos P."/>
            <person name="Goldman B.S."/>
            <person name="Ertesvaag H."/>
            <person name="Espin G."/>
            <person name="Rubio L.M."/>
            <person name="Valla S."/>
            <person name="Almeida N.F."/>
            <person name="Balasubramanian D."/>
            <person name="Cromes L."/>
            <person name="Curatti L."/>
            <person name="Du Z."/>
            <person name="Godsy E."/>
            <person name="Goodner B."/>
            <person name="Hellner-Burris K."/>
            <person name="Hernandez J.A."/>
            <person name="Houmiel K."/>
            <person name="Imperial J."/>
            <person name="Kennedy C."/>
            <person name="Larson T.J."/>
            <person name="Latreille P."/>
            <person name="Ligon L.S."/>
            <person name="Lu J."/>
            <person name="Maerk M."/>
            <person name="Miller N.M."/>
            <person name="Norton S."/>
            <person name="O'Carroll I.P."/>
            <person name="Paulsen I."/>
            <person name="Raulfs E.C."/>
            <person name="Roemer R."/>
            <person name="Rosser J."/>
            <person name="Segura D."/>
            <person name="Slater S."/>
            <person name="Stricklin S.L."/>
            <person name="Studholme D.J."/>
            <person name="Sun J."/>
            <person name="Viana C.J."/>
            <person name="Wallin E."/>
            <person name="Wang B."/>
            <person name="Wheeler C."/>
            <person name="Zhu H."/>
            <person name="Dean D.R."/>
            <person name="Dixon R."/>
            <person name="Wood D."/>
        </authorList>
    </citation>
    <scope>NUCLEOTIDE SEQUENCE [LARGE SCALE GENOMIC DNA]</scope>
    <source>
        <strain>DJ / ATCC BAA-1303</strain>
    </source>
</reference>